<feature type="chain" id="PRO_0000171995" description="Phytochrome A1">
    <location>
        <begin position="1"/>
        <end position="1124"/>
    </location>
</feature>
<feature type="domain" description="GAF">
    <location>
        <begin position="218"/>
        <end position="401"/>
    </location>
</feature>
<feature type="domain" description="PAS 1" evidence="3">
    <location>
        <begin position="617"/>
        <end position="687"/>
    </location>
</feature>
<feature type="domain" description="PAC" evidence="4">
    <location>
        <begin position="690"/>
        <end position="746"/>
    </location>
</feature>
<feature type="domain" description="PAS 2" evidence="3">
    <location>
        <begin position="747"/>
        <end position="821"/>
    </location>
</feature>
<feature type="domain" description="Histidine kinase" evidence="2">
    <location>
        <begin position="901"/>
        <end position="1118"/>
    </location>
</feature>
<feature type="region of interest" description="Disordered" evidence="5">
    <location>
        <begin position="1"/>
        <end position="20"/>
    </location>
</feature>
<feature type="compositionally biased region" description="Low complexity" evidence="5">
    <location>
        <begin position="1"/>
        <end position="14"/>
    </location>
</feature>
<feature type="binding site" description="covalent" evidence="1">
    <location>
        <position position="323"/>
    </location>
    <ligand>
        <name>phytochromobilin</name>
        <dbReference type="ChEBI" id="CHEBI:189064"/>
    </ligand>
</feature>
<comment type="function">
    <text>Regulatory photoreceptor which exists in two forms that are reversibly interconvertible by light: the Pr form that absorbs maximally in the red region of the spectrum and the Pfr form that absorbs maximally in the far-red region. Photoconversion of Pr to Pfr induces an array of morphogenic responses, whereas reconversion of Pfr to Pr cancels the induction of those responses. Pfr controls the expression of a number of nuclear genes including those encoding the small subunit of ribulose-bisphosphate carboxylase, chlorophyll A/B binding protein, protochlorophyllide reductase, rRNA, etc. It also controls the expression of its own gene(s) in a negative feedback fashion.</text>
</comment>
<comment type="subunit">
    <text>Homodimer.</text>
</comment>
<comment type="PTM">
    <text evidence="1">Contains one covalently linked phytochromobilin chromophore.</text>
</comment>
<comment type="similarity">
    <text evidence="6">Belongs to the phytochrome family.</text>
</comment>
<sequence length="1124" mass="124297">MSSSRPSQSSTTSARSKHSARIIAQTTIDAKLHADFEESGDSFDYSSSVRVTSVAGDERKPKSDRVTTAYLNQIQKGKFIQPFGCLLALDEKTFKVIAFSENAPEMLTMVSHAVPSVGELPALGIGTDIRTIFTGPSAAALQKALGFGEVSLLNPVLVHCKTSGKPYYAIVHRVTGSLIIDFEPVKPYEVPMTAAGALQSYKLAAKAITRLQALPSGSMERLCDTMVQEVFELTGYDRVMTYKFHDDDHGEVVAEITKPGLDPYLGLHYPATDIPQAARFLFMKNKVRMICDCRAKHVKVVQDEKLPFDLTLCGSTLRAPHYCHLQYMENMSSIASLVMAVVVNDGDEEGESSDSTQSQKRKRLWGLVVCHNTTPRFVPFPLRYACEFLAQVFAIHVNKELELESQILEKNILRTQTLLCDMLMRVAPLGIVSQSPNIMDLVKCDGAALLYKNKIHRLGMTPSDFQLHDIVSWLSEYHTDSTGLSTDSLYDAGFPGALALGDVVCGMAAVRISDKGWLFWYRSHTAAEVRWGGAKHEPGEKDDGRKMHPRSSFKAFLEVVKTRSVPWKDYEMDAIHSLQLILRNASKDADAMDSNTNIIHTKLNDLKIDGLQELEAVTAEMVRLIETASVPIFAVDVDGQLNGWNTKIAELTGLPVDEAIGNHLLTLVEDSSVDTVSKMLELALQGKEERNVEFEIKTHGPSGDSSPISLIVNACASRDVGDSVVGVCFIAQDITGQKNIMDKFTRIEGDYRAIIQNPHPLIPPIFGTDQFGWCSEWNSAMTKLTGWRRDDVIDKMLLGEVFGTQAACCRLKNQEAFVNFGVVLNNAMTGQECAKISFGFFARNGKYVECLLCVSKRLDREGAVTGLFCFLQLASHELQQALHIQRLSEQTALKRLKVLAYIRRQIRNPLSGIIFSRKMLEGTNLGEEQKNILRTSSQCQRQLNKILDDTDLDSIIDGYLDLEMLEFKLHEVLVASISQIMMKSNGKNIMIVNDMVEDLLNETLYGDSPRLQQVLANFLLVCVNSTPSGGQLSISGTLTKDRIGESVQLALLEVRISHTGGGVPEELLSQMFGTEAEASEEGISLLISRKLVKLMNGEVQYLREAGRSTFIISVELAVATKSSC</sequence>
<proteinExistence type="inferred from homology"/>
<keyword id="KW-0157">Chromophore</keyword>
<keyword id="KW-0600">Photoreceptor protein</keyword>
<keyword id="KW-0675">Receptor</keyword>
<keyword id="KW-1185">Reference proteome</keyword>
<keyword id="KW-0677">Repeat</keyword>
<keyword id="KW-0716">Sensory transduction</keyword>
<keyword id="KW-0804">Transcription</keyword>
<keyword id="KW-0805">Transcription regulation</keyword>
<protein>
    <recommendedName>
        <fullName>Phytochrome A1</fullName>
    </recommendedName>
</protein>
<organism>
    <name type="scientific">Nicotiana tabacum</name>
    <name type="common">Common tobacco</name>
    <dbReference type="NCBI Taxonomy" id="4097"/>
    <lineage>
        <taxon>Eukaryota</taxon>
        <taxon>Viridiplantae</taxon>
        <taxon>Streptophyta</taxon>
        <taxon>Embryophyta</taxon>
        <taxon>Tracheophyta</taxon>
        <taxon>Spermatophyta</taxon>
        <taxon>Magnoliopsida</taxon>
        <taxon>eudicotyledons</taxon>
        <taxon>Gunneridae</taxon>
        <taxon>Pentapetalae</taxon>
        <taxon>asterids</taxon>
        <taxon>lamiids</taxon>
        <taxon>Solanales</taxon>
        <taxon>Solanaceae</taxon>
        <taxon>Nicotianoideae</taxon>
        <taxon>Nicotianeae</taxon>
        <taxon>Nicotiana</taxon>
    </lineage>
</organism>
<dbReference type="EMBL" id="X66784">
    <property type="protein sequence ID" value="CAA47284.1"/>
    <property type="molecule type" value="Genomic_DNA"/>
</dbReference>
<dbReference type="SMR" id="P33530"/>
<dbReference type="STRING" id="4097.P33530"/>
<dbReference type="PaxDb" id="4097-P33530"/>
<dbReference type="Proteomes" id="UP000084051">
    <property type="component" value="Unplaced"/>
</dbReference>
<dbReference type="GO" id="GO:0005634">
    <property type="term" value="C:nucleus"/>
    <property type="evidence" value="ECO:0000318"/>
    <property type="project" value="GO_Central"/>
</dbReference>
<dbReference type="GO" id="GO:0000155">
    <property type="term" value="F:phosphorelay sensor kinase activity"/>
    <property type="evidence" value="ECO:0007669"/>
    <property type="project" value="InterPro"/>
</dbReference>
<dbReference type="GO" id="GO:0009881">
    <property type="term" value="F:photoreceptor activity"/>
    <property type="evidence" value="ECO:0007669"/>
    <property type="project" value="UniProtKB-KW"/>
</dbReference>
<dbReference type="GO" id="GO:0042803">
    <property type="term" value="F:protein homodimerization activity"/>
    <property type="evidence" value="ECO:0007669"/>
    <property type="project" value="InterPro"/>
</dbReference>
<dbReference type="GO" id="GO:0009584">
    <property type="term" value="P:detection of visible light"/>
    <property type="evidence" value="ECO:0007669"/>
    <property type="project" value="InterPro"/>
</dbReference>
<dbReference type="GO" id="GO:0009585">
    <property type="term" value="P:red, far-red light phototransduction"/>
    <property type="evidence" value="ECO:0007669"/>
    <property type="project" value="InterPro"/>
</dbReference>
<dbReference type="GO" id="GO:0006355">
    <property type="term" value="P:regulation of DNA-templated transcription"/>
    <property type="evidence" value="ECO:0007669"/>
    <property type="project" value="InterPro"/>
</dbReference>
<dbReference type="CDD" id="cd00082">
    <property type="entry name" value="HisKA"/>
    <property type="match status" value="1"/>
</dbReference>
<dbReference type="CDD" id="cd00130">
    <property type="entry name" value="PAS"/>
    <property type="match status" value="2"/>
</dbReference>
<dbReference type="FunFam" id="3.30.450.20:FF:000039">
    <property type="entry name" value="Phytochrome"/>
    <property type="match status" value="1"/>
</dbReference>
<dbReference type="FunFam" id="3.30.450.270:FF:000001">
    <property type="entry name" value="Phytochrome"/>
    <property type="match status" value="1"/>
</dbReference>
<dbReference type="Gene3D" id="1.10.287.130">
    <property type="match status" value="1"/>
</dbReference>
<dbReference type="Gene3D" id="3.30.450.270">
    <property type="match status" value="1"/>
</dbReference>
<dbReference type="Gene3D" id="3.30.450.40">
    <property type="match status" value="1"/>
</dbReference>
<dbReference type="Gene3D" id="3.30.565.10">
    <property type="entry name" value="Histidine kinase-like ATPase, C-terminal domain"/>
    <property type="match status" value="1"/>
</dbReference>
<dbReference type="Gene3D" id="3.30.450.20">
    <property type="entry name" value="PAS domain"/>
    <property type="match status" value="3"/>
</dbReference>
<dbReference type="InterPro" id="IPR003018">
    <property type="entry name" value="GAF"/>
</dbReference>
<dbReference type="InterPro" id="IPR029016">
    <property type="entry name" value="GAF-like_dom_sf"/>
</dbReference>
<dbReference type="InterPro" id="IPR036890">
    <property type="entry name" value="HATPase_C_sf"/>
</dbReference>
<dbReference type="InterPro" id="IPR005467">
    <property type="entry name" value="His_kinase_dom"/>
</dbReference>
<dbReference type="InterPro" id="IPR003661">
    <property type="entry name" value="HisK_dim/P_dom"/>
</dbReference>
<dbReference type="InterPro" id="IPR000014">
    <property type="entry name" value="PAS"/>
</dbReference>
<dbReference type="InterPro" id="IPR000700">
    <property type="entry name" value="PAS-assoc_C"/>
</dbReference>
<dbReference type="InterPro" id="IPR035965">
    <property type="entry name" value="PAS-like_dom_sf"/>
</dbReference>
<dbReference type="InterPro" id="IPR013654">
    <property type="entry name" value="PAS_2"/>
</dbReference>
<dbReference type="InterPro" id="IPR013767">
    <property type="entry name" value="PAS_fold"/>
</dbReference>
<dbReference type="InterPro" id="IPR016132">
    <property type="entry name" value="Phyto_chromo_attachment"/>
</dbReference>
<dbReference type="InterPro" id="IPR013516">
    <property type="entry name" value="Phyto_chromo_BS"/>
</dbReference>
<dbReference type="InterPro" id="IPR001294">
    <property type="entry name" value="Phytochrome"/>
</dbReference>
<dbReference type="InterPro" id="IPR012129">
    <property type="entry name" value="Phytochrome_A-E"/>
</dbReference>
<dbReference type="InterPro" id="IPR013515">
    <property type="entry name" value="Phytochrome_cen-reg"/>
</dbReference>
<dbReference type="InterPro" id="IPR043150">
    <property type="entry name" value="Phytochrome_PHY_sf"/>
</dbReference>
<dbReference type="NCBIfam" id="TIGR00229">
    <property type="entry name" value="sensory_box"/>
    <property type="match status" value="1"/>
</dbReference>
<dbReference type="PANTHER" id="PTHR47876">
    <property type="entry name" value="OS08G0260000 PROTEIN"/>
    <property type="match status" value="1"/>
</dbReference>
<dbReference type="PANTHER" id="PTHR47876:SF3">
    <property type="entry name" value="PHYTOCHROME 1"/>
    <property type="match status" value="1"/>
</dbReference>
<dbReference type="Pfam" id="PF01590">
    <property type="entry name" value="GAF"/>
    <property type="match status" value="1"/>
</dbReference>
<dbReference type="Pfam" id="PF02518">
    <property type="entry name" value="HATPase_c"/>
    <property type="match status" value="1"/>
</dbReference>
<dbReference type="Pfam" id="PF00512">
    <property type="entry name" value="HisKA"/>
    <property type="match status" value="1"/>
</dbReference>
<dbReference type="Pfam" id="PF00989">
    <property type="entry name" value="PAS"/>
    <property type="match status" value="2"/>
</dbReference>
<dbReference type="Pfam" id="PF08446">
    <property type="entry name" value="PAS_2"/>
    <property type="match status" value="1"/>
</dbReference>
<dbReference type="Pfam" id="PF00360">
    <property type="entry name" value="PHY"/>
    <property type="match status" value="1"/>
</dbReference>
<dbReference type="PIRSF" id="PIRSF000084">
    <property type="entry name" value="Phytochrome"/>
    <property type="match status" value="1"/>
</dbReference>
<dbReference type="PRINTS" id="PR01033">
    <property type="entry name" value="PHYTOCHROME"/>
</dbReference>
<dbReference type="SMART" id="SM00065">
    <property type="entry name" value="GAF"/>
    <property type="match status" value="1"/>
</dbReference>
<dbReference type="SMART" id="SM00387">
    <property type="entry name" value="HATPase_c"/>
    <property type="match status" value="1"/>
</dbReference>
<dbReference type="SMART" id="SM00388">
    <property type="entry name" value="HisKA"/>
    <property type="match status" value="1"/>
</dbReference>
<dbReference type="SMART" id="SM00091">
    <property type="entry name" value="PAS"/>
    <property type="match status" value="2"/>
</dbReference>
<dbReference type="SUPFAM" id="SSF55874">
    <property type="entry name" value="ATPase domain of HSP90 chaperone/DNA topoisomerase II/histidine kinase"/>
    <property type="match status" value="1"/>
</dbReference>
<dbReference type="SUPFAM" id="SSF55781">
    <property type="entry name" value="GAF domain-like"/>
    <property type="match status" value="2"/>
</dbReference>
<dbReference type="SUPFAM" id="SSF55785">
    <property type="entry name" value="PYP-like sensor domain (PAS domain)"/>
    <property type="match status" value="3"/>
</dbReference>
<dbReference type="PROSITE" id="PS50109">
    <property type="entry name" value="HIS_KIN"/>
    <property type="match status" value="1"/>
</dbReference>
<dbReference type="PROSITE" id="PS50113">
    <property type="entry name" value="PAC"/>
    <property type="match status" value="1"/>
</dbReference>
<dbReference type="PROSITE" id="PS50112">
    <property type="entry name" value="PAS"/>
    <property type="match status" value="2"/>
</dbReference>
<dbReference type="PROSITE" id="PS00245">
    <property type="entry name" value="PHYTOCHROME_1"/>
    <property type="match status" value="1"/>
</dbReference>
<dbReference type="PROSITE" id="PS50046">
    <property type="entry name" value="PHYTOCHROME_2"/>
    <property type="match status" value="1"/>
</dbReference>
<name>PHYA1_TOBAC</name>
<reference key="1">
    <citation type="journal article" date="1993" name="Plant Physiol.">
        <title>Sequence of a tobacco (Nicotiana tabacum) gene coding for type A phytochrome.</title>
        <authorList>
            <person name="Adam E."/>
            <person name="Deak M."/>
            <person name="Kay S."/>
            <person name="Chua N.H."/>
            <person name="Nagy F."/>
        </authorList>
    </citation>
    <scope>NUCLEOTIDE SEQUENCE [GENOMIC DNA]</scope>
</reference>
<gene>
    <name type="primary">PHYA1</name>
</gene>
<accession>P33530</accession>
<evidence type="ECO:0000250" key="1"/>
<evidence type="ECO:0000255" key="2">
    <source>
        <dbReference type="PROSITE-ProRule" id="PRU00107"/>
    </source>
</evidence>
<evidence type="ECO:0000255" key="3">
    <source>
        <dbReference type="PROSITE-ProRule" id="PRU00140"/>
    </source>
</evidence>
<evidence type="ECO:0000255" key="4">
    <source>
        <dbReference type="PROSITE-ProRule" id="PRU00141"/>
    </source>
</evidence>
<evidence type="ECO:0000256" key="5">
    <source>
        <dbReference type="SAM" id="MobiDB-lite"/>
    </source>
</evidence>
<evidence type="ECO:0000305" key="6"/>